<gene>
    <name evidence="1" type="primary">ybeY</name>
    <name type="ordered locus">PEPE_1106</name>
</gene>
<organism>
    <name type="scientific">Pediococcus pentosaceus (strain ATCC 25745 / CCUG 21536 / LMG 10740 / 183-1w)</name>
    <dbReference type="NCBI Taxonomy" id="278197"/>
    <lineage>
        <taxon>Bacteria</taxon>
        <taxon>Bacillati</taxon>
        <taxon>Bacillota</taxon>
        <taxon>Bacilli</taxon>
        <taxon>Lactobacillales</taxon>
        <taxon>Lactobacillaceae</taxon>
        <taxon>Pediococcus</taxon>
    </lineage>
</organism>
<dbReference type="EC" id="3.1.-.-" evidence="1"/>
<dbReference type="EMBL" id="CP000422">
    <property type="protein sequence ID" value="ABJ68161.1"/>
    <property type="molecule type" value="Genomic_DNA"/>
</dbReference>
<dbReference type="RefSeq" id="WP_002833412.1">
    <property type="nucleotide sequence ID" value="NC_008525.1"/>
</dbReference>
<dbReference type="SMR" id="Q03F61"/>
<dbReference type="STRING" id="278197.PEPE_1106"/>
<dbReference type="GeneID" id="33062705"/>
<dbReference type="KEGG" id="ppe:PEPE_1106"/>
<dbReference type="eggNOG" id="COG0319">
    <property type="taxonomic scope" value="Bacteria"/>
</dbReference>
<dbReference type="HOGENOM" id="CLU_106710_3_0_9"/>
<dbReference type="OrthoDB" id="9807740at2"/>
<dbReference type="Proteomes" id="UP000000773">
    <property type="component" value="Chromosome"/>
</dbReference>
<dbReference type="GO" id="GO:0005737">
    <property type="term" value="C:cytoplasm"/>
    <property type="evidence" value="ECO:0007669"/>
    <property type="project" value="UniProtKB-SubCell"/>
</dbReference>
<dbReference type="GO" id="GO:0004222">
    <property type="term" value="F:metalloendopeptidase activity"/>
    <property type="evidence" value="ECO:0007669"/>
    <property type="project" value="InterPro"/>
</dbReference>
<dbReference type="GO" id="GO:0004521">
    <property type="term" value="F:RNA endonuclease activity"/>
    <property type="evidence" value="ECO:0007669"/>
    <property type="project" value="UniProtKB-UniRule"/>
</dbReference>
<dbReference type="GO" id="GO:0008270">
    <property type="term" value="F:zinc ion binding"/>
    <property type="evidence" value="ECO:0007669"/>
    <property type="project" value="UniProtKB-UniRule"/>
</dbReference>
<dbReference type="GO" id="GO:0006364">
    <property type="term" value="P:rRNA processing"/>
    <property type="evidence" value="ECO:0007669"/>
    <property type="project" value="UniProtKB-UniRule"/>
</dbReference>
<dbReference type="Gene3D" id="3.40.390.30">
    <property type="entry name" value="Metalloproteases ('zincins'), catalytic domain"/>
    <property type="match status" value="1"/>
</dbReference>
<dbReference type="HAMAP" id="MF_00009">
    <property type="entry name" value="Endoribonucl_YbeY"/>
    <property type="match status" value="1"/>
</dbReference>
<dbReference type="InterPro" id="IPR023091">
    <property type="entry name" value="MetalPrtase_cat_dom_sf_prd"/>
</dbReference>
<dbReference type="InterPro" id="IPR002036">
    <property type="entry name" value="YbeY"/>
</dbReference>
<dbReference type="InterPro" id="IPR020549">
    <property type="entry name" value="YbeY_CS"/>
</dbReference>
<dbReference type="NCBIfam" id="TIGR00043">
    <property type="entry name" value="rRNA maturation RNase YbeY"/>
    <property type="match status" value="1"/>
</dbReference>
<dbReference type="PANTHER" id="PTHR46986">
    <property type="entry name" value="ENDORIBONUCLEASE YBEY, CHLOROPLASTIC"/>
    <property type="match status" value="1"/>
</dbReference>
<dbReference type="PANTHER" id="PTHR46986:SF1">
    <property type="entry name" value="ENDORIBONUCLEASE YBEY, CHLOROPLASTIC"/>
    <property type="match status" value="1"/>
</dbReference>
<dbReference type="Pfam" id="PF02130">
    <property type="entry name" value="YbeY"/>
    <property type="match status" value="1"/>
</dbReference>
<dbReference type="SUPFAM" id="SSF55486">
    <property type="entry name" value="Metalloproteases ('zincins'), catalytic domain"/>
    <property type="match status" value="1"/>
</dbReference>
<dbReference type="PROSITE" id="PS01306">
    <property type="entry name" value="UPF0054"/>
    <property type="match status" value="1"/>
</dbReference>
<evidence type="ECO:0000255" key="1">
    <source>
        <dbReference type="HAMAP-Rule" id="MF_00009"/>
    </source>
</evidence>
<sequence length="156" mass="18155">MDIQTFDHTKEENPKNLELITDILEFAGNYLHLDEETEISVTLMHNDEIHQINKEYRNVDRPTDVISFAINDADEDIIMDPEMAEEIPANIGDLMISVDKVAEQAEFLGHSYERELGFLCVHGFLHLNGYDHMEKEDQEKMFPLQKEIMNAYGLKR</sequence>
<reference key="1">
    <citation type="journal article" date="2006" name="Proc. Natl. Acad. Sci. U.S.A.">
        <title>Comparative genomics of the lactic acid bacteria.</title>
        <authorList>
            <person name="Makarova K.S."/>
            <person name="Slesarev A."/>
            <person name="Wolf Y.I."/>
            <person name="Sorokin A."/>
            <person name="Mirkin B."/>
            <person name="Koonin E.V."/>
            <person name="Pavlov A."/>
            <person name="Pavlova N."/>
            <person name="Karamychev V."/>
            <person name="Polouchine N."/>
            <person name="Shakhova V."/>
            <person name="Grigoriev I."/>
            <person name="Lou Y."/>
            <person name="Rohksar D."/>
            <person name="Lucas S."/>
            <person name="Huang K."/>
            <person name="Goodstein D.M."/>
            <person name="Hawkins T."/>
            <person name="Plengvidhya V."/>
            <person name="Welker D."/>
            <person name="Hughes J."/>
            <person name="Goh Y."/>
            <person name="Benson A."/>
            <person name="Baldwin K."/>
            <person name="Lee J.-H."/>
            <person name="Diaz-Muniz I."/>
            <person name="Dosti B."/>
            <person name="Smeianov V."/>
            <person name="Wechter W."/>
            <person name="Barabote R."/>
            <person name="Lorca G."/>
            <person name="Altermann E."/>
            <person name="Barrangou R."/>
            <person name="Ganesan B."/>
            <person name="Xie Y."/>
            <person name="Rawsthorne H."/>
            <person name="Tamir D."/>
            <person name="Parker C."/>
            <person name="Breidt F."/>
            <person name="Broadbent J.R."/>
            <person name="Hutkins R."/>
            <person name="O'Sullivan D."/>
            <person name="Steele J."/>
            <person name="Unlu G."/>
            <person name="Saier M.H. Jr."/>
            <person name="Klaenhammer T."/>
            <person name="Richardson P."/>
            <person name="Kozyavkin S."/>
            <person name="Weimer B.C."/>
            <person name="Mills D.A."/>
        </authorList>
    </citation>
    <scope>NUCLEOTIDE SEQUENCE [LARGE SCALE GENOMIC DNA]</scope>
    <source>
        <strain>ATCC 25745 / CCUG 21536 / LMG 10740 / 183-1w</strain>
    </source>
</reference>
<proteinExistence type="inferred from homology"/>
<protein>
    <recommendedName>
        <fullName evidence="1">Endoribonuclease YbeY</fullName>
        <ecNumber evidence="1">3.1.-.-</ecNumber>
    </recommendedName>
</protein>
<comment type="function">
    <text evidence="1">Single strand-specific metallo-endoribonuclease involved in late-stage 70S ribosome quality control and in maturation of the 3' terminus of the 16S rRNA.</text>
</comment>
<comment type="cofactor">
    <cofactor evidence="1">
        <name>Zn(2+)</name>
        <dbReference type="ChEBI" id="CHEBI:29105"/>
    </cofactor>
    <text evidence="1">Binds 1 zinc ion.</text>
</comment>
<comment type="subcellular location">
    <subcellularLocation>
        <location evidence="1">Cytoplasm</location>
    </subcellularLocation>
</comment>
<comment type="similarity">
    <text evidence="1">Belongs to the endoribonuclease YbeY family.</text>
</comment>
<keyword id="KW-0963">Cytoplasm</keyword>
<keyword id="KW-0255">Endonuclease</keyword>
<keyword id="KW-0378">Hydrolase</keyword>
<keyword id="KW-0479">Metal-binding</keyword>
<keyword id="KW-0540">Nuclease</keyword>
<keyword id="KW-0690">Ribosome biogenesis</keyword>
<keyword id="KW-0698">rRNA processing</keyword>
<keyword id="KW-0862">Zinc</keyword>
<accession>Q03F61</accession>
<feature type="chain" id="PRO_0000284263" description="Endoribonuclease YbeY">
    <location>
        <begin position="1"/>
        <end position="156"/>
    </location>
</feature>
<feature type="binding site" evidence="1">
    <location>
        <position position="122"/>
    </location>
    <ligand>
        <name>Zn(2+)</name>
        <dbReference type="ChEBI" id="CHEBI:29105"/>
        <note>catalytic</note>
    </ligand>
</feature>
<feature type="binding site" evidence="1">
    <location>
        <position position="126"/>
    </location>
    <ligand>
        <name>Zn(2+)</name>
        <dbReference type="ChEBI" id="CHEBI:29105"/>
        <note>catalytic</note>
    </ligand>
</feature>
<feature type="binding site" evidence="1">
    <location>
        <position position="132"/>
    </location>
    <ligand>
        <name>Zn(2+)</name>
        <dbReference type="ChEBI" id="CHEBI:29105"/>
        <note>catalytic</note>
    </ligand>
</feature>
<name>YBEY_PEDPA</name>